<comment type="function">
    <text>Orphan nuclear receptor.</text>
</comment>
<comment type="subcellular location">
    <subcellularLocation>
        <location evidence="1">Nucleus</location>
    </subcellularLocation>
</comment>
<comment type="similarity">
    <text evidence="3">Belongs to the nuclear hormone receptor family.</text>
</comment>
<name>NHR96_CAEEL</name>
<sequence length="402" mass="46145">MLSFGLCAVCGQVTTGKNFGVISCRSCAAFFRRAPTWSRRFPECVKASCAIFENGKFKCKKCRLKRCQEVGMDVKKIQQNRDLISTSNMFQKRVTLIFGPAHSMSTFLGRPSFLLHCEPELASHSKTIIDVSYLVDVARKIFEKDATISHKSSNYYNSLELLTLALDAFRPKDIDKKLTRLTKIGKNESLLMWEQSFLRAAEWFSNLPSFMKLEDWMKLDILKSSWLAWTRLEKRCEAADYQKSKILENGVFMCGNGSCLAIAEYEVDLSWCTNYTAEQLKYYLSPDSEGQKCIEDLIELSPSSTEVNFMILQLTLHHAGKKSQGRLLEATENIIEAQANHLHSYYVEKVKMPNYSARLAKMMKINRGIAGEMRCRREKNQIARVFDIMKVEFSDPEMFELT</sequence>
<accession>Q95X91</accession>
<dbReference type="EMBL" id="FO081357">
    <property type="protein sequence ID" value="CCD71014.1"/>
    <property type="molecule type" value="Genomic_DNA"/>
</dbReference>
<dbReference type="RefSeq" id="NP_503611.3">
    <property type="nucleotide sequence ID" value="NM_071210.4"/>
</dbReference>
<dbReference type="BioGRID" id="43764">
    <property type="interactions" value="1"/>
</dbReference>
<dbReference type="DIP" id="DIP-25507N"/>
<dbReference type="FunCoup" id="Q95X91">
    <property type="interactions" value="49"/>
</dbReference>
<dbReference type="PaxDb" id="6239-F44C8.11"/>
<dbReference type="EnsemblMetazoa" id="F44C8.11.1">
    <property type="protein sequence ID" value="F44C8.11.1"/>
    <property type="gene ID" value="WBGene00003686"/>
</dbReference>
<dbReference type="GeneID" id="178703"/>
<dbReference type="KEGG" id="cel:CELE_F44C8.11"/>
<dbReference type="UCSC" id="F44C8.11">
    <property type="organism name" value="c. elegans"/>
</dbReference>
<dbReference type="AGR" id="WB:WBGene00003686"/>
<dbReference type="CTD" id="178703"/>
<dbReference type="WormBase" id="F44C8.11">
    <property type="protein sequence ID" value="CE35309"/>
    <property type="gene ID" value="WBGene00003686"/>
    <property type="gene designation" value="nhr-96"/>
</dbReference>
<dbReference type="eggNOG" id="KOG3575">
    <property type="taxonomic scope" value="Eukaryota"/>
</dbReference>
<dbReference type="GeneTree" id="ENSGT00970000195928"/>
<dbReference type="HOGENOM" id="CLU_007368_7_1_1"/>
<dbReference type="InParanoid" id="Q95X91"/>
<dbReference type="OrthoDB" id="5850793at2759"/>
<dbReference type="PhylomeDB" id="Q95X91"/>
<dbReference type="PRO" id="PR:Q95X91"/>
<dbReference type="Proteomes" id="UP000001940">
    <property type="component" value="Chromosome V"/>
</dbReference>
<dbReference type="Bgee" id="WBGene00003686">
    <property type="expression patterns" value="Expressed in pharyngeal muscle cell (C elegans) and 3 other cell types or tissues"/>
</dbReference>
<dbReference type="GO" id="GO:0005634">
    <property type="term" value="C:nucleus"/>
    <property type="evidence" value="ECO:0007669"/>
    <property type="project" value="UniProtKB-SubCell"/>
</dbReference>
<dbReference type="GO" id="GO:0003700">
    <property type="term" value="F:DNA-binding transcription factor activity"/>
    <property type="evidence" value="ECO:0007669"/>
    <property type="project" value="InterPro"/>
</dbReference>
<dbReference type="GO" id="GO:0000978">
    <property type="term" value="F:RNA polymerase II cis-regulatory region sequence-specific DNA binding"/>
    <property type="evidence" value="ECO:0007669"/>
    <property type="project" value="InterPro"/>
</dbReference>
<dbReference type="GO" id="GO:0008270">
    <property type="term" value="F:zinc ion binding"/>
    <property type="evidence" value="ECO:0007669"/>
    <property type="project" value="UniProtKB-KW"/>
</dbReference>
<dbReference type="CDD" id="cd06960">
    <property type="entry name" value="NR_DBD_HNF4A"/>
    <property type="match status" value="1"/>
</dbReference>
<dbReference type="Gene3D" id="3.30.50.10">
    <property type="entry name" value="Erythroid Transcription Factor GATA-1, subunit A"/>
    <property type="match status" value="1"/>
</dbReference>
<dbReference type="Gene3D" id="1.10.565.10">
    <property type="entry name" value="Retinoid X Receptor"/>
    <property type="match status" value="1"/>
</dbReference>
<dbReference type="InterPro" id="IPR051152">
    <property type="entry name" value="C.elegans_Orphan_NR"/>
</dbReference>
<dbReference type="InterPro" id="IPR049636">
    <property type="entry name" value="HNF4-like_DBD"/>
</dbReference>
<dbReference type="InterPro" id="IPR035500">
    <property type="entry name" value="NHR-like_dom_sf"/>
</dbReference>
<dbReference type="InterPro" id="IPR000536">
    <property type="entry name" value="Nucl_hrmn_rcpt_lig-bd"/>
</dbReference>
<dbReference type="InterPro" id="IPR001628">
    <property type="entry name" value="Znf_hrmn_rcpt"/>
</dbReference>
<dbReference type="InterPro" id="IPR013088">
    <property type="entry name" value="Znf_NHR/GATA"/>
</dbReference>
<dbReference type="PANTHER" id="PTHR45680">
    <property type="entry name" value="NUCLEAR HORMONE RECEPTOR FAMILY"/>
    <property type="match status" value="1"/>
</dbReference>
<dbReference type="PANTHER" id="PTHR45680:SF28">
    <property type="entry name" value="NUCLEAR HORMONE RECEPTOR FAMILY-RELATED"/>
    <property type="match status" value="1"/>
</dbReference>
<dbReference type="Pfam" id="PF00104">
    <property type="entry name" value="Hormone_recep"/>
    <property type="match status" value="1"/>
</dbReference>
<dbReference type="Pfam" id="PF00105">
    <property type="entry name" value="zf-C4"/>
    <property type="match status" value="1"/>
</dbReference>
<dbReference type="PRINTS" id="PR00047">
    <property type="entry name" value="STROIDFINGER"/>
</dbReference>
<dbReference type="SMART" id="SM00430">
    <property type="entry name" value="HOLI"/>
    <property type="match status" value="1"/>
</dbReference>
<dbReference type="SMART" id="SM00399">
    <property type="entry name" value="ZnF_C4"/>
    <property type="match status" value="1"/>
</dbReference>
<dbReference type="SUPFAM" id="SSF57716">
    <property type="entry name" value="Glucocorticoid receptor-like (DNA-binding domain)"/>
    <property type="match status" value="1"/>
</dbReference>
<dbReference type="SUPFAM" id="SSF48508">
    <property type="entry name" value="Nuclear receptor ligand-binding domain"/>
    <property type="match status" value="1"/>
</dbReference>
<dbReference type="PROSITE" id="PS51843">
    <property type="entry name" value="NR_LBD"/>
    <property type="match status" value="1"/>
</dbReference>
<dbReference type="PROSITE" id="PS00031">
    <property type="entry name" value="NUCLEAR_REC_DBD_1"/>
    <property type="match status" value="1"/>
</dbReference>
<dbReference type="PROSITE" id="PS51030">
    <property type="entry name" value="NUCLEAR_REC_DBD_2"/>
    <property type="match status" value="1"/>
</dbReference>
<reference key="1">
    <citation type="journal article" date="1998" name="Science">
        <title>Genome sequence of the nematode C. elegans: a platform for investigating biology.</title>
        <authorList>
            <consortium name="The C. elegans sequencing consortium"/>
        </authorList>
    </citation>
    <scope>NUCLEOTIDE SEQUENCE [LARGE SCALE GENOMIC DNA]</scope>
    <source>
        <strain>Bristol N2</strain>
    </source>
</reference>
<proteinExistence type="inferred from homology"/>
<feature type="chain" id="PRO_0000053800" description="Nuclear hormone receptor family member nhr-96">
    <location>
        <begin position="1"/>
        <end position="402"/>
    </location>
</feature>
<feature type="domain" description="NR LBD" evidence="2">
    <location>
        <begin position="154"/>
        <end position="402"/>
    </location>
</feature>
<feature type="DNA-binding region" description="Nuclear receptor" evidence="1">
    <location>
        <begin position="4"/>
        <end position="79"/>
    </location>
</feature>
<feature type="zinc finger region" description="NR C4-type" evidence="1">
    <location>
        <begin position="7"/>
        <end position="27"/>
    </location>
</feature>
<feature type="zinc finger region" description="NR C4-type" evidence="1">
    <location>
        <begin position="44"/>
        <end position="67"/>
    </location>
</feature>
<protein>
    <recommendedName>
        <fullName>Nuclear hormone receptor family member nhr-96</fullName>
    </recommendedName>
</protein>
<gene>
    <name type="primary">nhr-96</name>
    <name type="ORF">F44C8.11</name>
</gene>
<keyword id="KW-0238">DNA-binding</keyword>
<keyword id="KW-0479">Metal-binding</keyword>
<keyword id="KW-0539">Nucleus</keyword>
<keyword id="KW-0675">Receptor</keyword>
<keyword id="KW-1185">Reference proteome</keyword>
<keyword id="KW-0804">Transcription</keyword>
<keyword id="KW-0805">Transcription regulation</keyword>
<keyword id="KW-0862">Zinc</keyword>
<keyword id="KW-0863">Zinc-finger</keyword>
<evidence type="ECO:0000255" key="1">
    <source>
        <dbReference type="PROSITE-ProRule" id="PRU00407"/>
    </source>
</evidence>
<evidence type="ECO:0000255" key="2">
    <source>
        <dbReference type="PROSITE-ProRule" id="PRU01189"/>
    </source>
</evidence>
<evidence type="ECO:0000305" key="3"/>
<organism>
    <name type="scientific">Caenorhabditis elegans</name>
    <dbReference type="NCBI Taxonomy" id="6239"/>
    <lineage>
        <taxon>Eukaryota</taxon>
        <taxon>Metazoa</taxon>
        <taxon>Ecdysozoa</taxon>
        <taxon>Nematoda</taxon>
        <taxon>Chromadorea</taxon>
        <taxon>Rhabditida</taxon>
        <taxon>Rhabditina</taxon>
        <taxon>Rhabditomorpha</taxon>
        <taxon>Rhabditoidea</taxon>
        <taxon>Rhabditidae</taxon>
        <taxon>Peloderinae</taxon>
        <taxon>Caenorhabditis</taxon>
    </lineage>
</organism>